<keyword id="KW-1003">Cell membrane</keyword>
<keyword id="KW-0968">Cytoplasmic vesicle</keyword>
<keyword id="KW-0268">Exocytosis</keyword>
<keyword id="KW-0342">GTP-binding</keyword>
<keyword id="KW-0449">Lipoprotein</keyword>
<keyword id="KW-0472">Membrane</keyword>
<keyword id="KW-0547">Nucleotide-binding</keyword>
<keyword id="KW-0636">Prenylation</keyword>
<keyword id="KW-0653">Protein transport</keyword>
<keyword id="KW-0813">Transport</keyword>
<dbReference type="EMBL" id="AF017183">
    <property type="protein sequence ID" value="AAC50022.1"/>
    <property type="molecule type" value="Genomic_DNA"/>
</dbReference>
<dbReference type="EMBL" id="AF015306">
    <property type="protein sequence ID" value="AAB67974.1"/>
    <property type="molecule type" value="Genomic_DNA"/>
</dbReference>
<dbReference type="EMBL" id="CM000309">
    <property type="protein sequence ID" value="EEQ43292.1"/>
    <property type="molecule type" value="Genomic_DNA"/>
</dbReference>
<dbReference type="SMR" id="C4YL11"/>
<dbReference type="PaxDb" id="5476-C4YL11"/>
<dbReference type="VEuPathDB" id="FungiDB:CAWG_01525"/>
<dbReference type="HOGENOM" id="CLU_041217_23_1_1"/>
<dbReference type="OMA" id="SKMEQNE"/>
<dbReference type="OrthoDB" id="1359at766764"/>
<dbReference type="Proteomes" id="UP000001429">
    <property type="component" value="Chromosome R"/>
</dbReference>
<dbReference type="GO" id="GO:0005886">
    <property type="term" value="C:plasma membrane"/>
    <property type="evidence" value="ECO:0007669"/>
    <property type="project" value="UniProtKB-SubCell"/>
</dbReference>
<dbReference type="GO" id="GO:0030658">
    <property type="term" value="C:transport vesicle membrane"/>
    <property type="evidence" value="ECO:0007669"/>
    <property type="project" value="UniProtKB-SubCell"/>
</dbReference>
<dbReference type="GO" id="GO:0005525">
    <property type="term" value="F:GTP binding"/>
    <property type="evidence" value="ECO:0007669"/>
    <property type="project" value="UniProtKB-KW"/>
</dbReference>
<dbReference type="GO" id="GO:0003924">
    <property type="term" value="F:GTPase activity"/>
    <property type="evidence" value="ECO:0007669"/>
    <property type="project" value="InterPro"/>
</dbReference>
<dbReference type="GO" id="GO:0006887">
    <property type="term" value="P:exocytosis"/>
    <property type="evidence" value="ECO:0007669"/>
    <property type="project" value="UniProtKB-KW"/>
</dbReference>
<dbReference type="GO" id="GO:0015031">
    <property type="term" value="P:protein transport"/>
    <property type="evidence" value="ECO:0007669"/>
    <property type="project" value="UniProtKB-KW"/>
</dbReference>
<dbReference type="CDD" id="cd01867">
    <property type="entry name" value="Rab8_Rab10_Rab13_like"/>
    <property type="match status" value="1"/>
</dbReference>
<dbReference type="FunFam" id="3.40.50.300:FF:000961">
    <property type="entry name" value="Ras-related protein Rab-8B"/>
    <property type="match status" value="1"/>
</dbReference>
<dbReference type="Gene3D" id="3.40.50.300">
    <property type="entry name" value="P-loop containing nucleotide triphosphate hydrolases"/>
    <property type="match status" value="1"/>
</dbReference>
<dbReference type="InterPro" id="IPR027417">
    <property type="entry name" value="P-loop_NTPase"/>
</dbReference>
<dbReference type="InterPro" id="IPR005225">
    <property type="entry name" value="Small_GTP-bd"/>
</dbReference>
<dbReference type="InterPro" id="IPR001806">
    <property type="entry name" value="Small_GTPase"/>
</dbReference>
<dbReference type="InterPro" id="IPR050305">
    <property type="entry name" value="Small_GTPase_Rab"/>
</dbReference>
<dbReference type="NCBIfam" id="TIGR00231">
    <property type="entry name" value="small_GTP"/>
    <property type="match status" value="1"/>
</dbReference>
<dbReference type="PANTHER" id="PTHR47980">
    <property type="entry name" value="LD44762P"/>
    <property type="match status" value="1"/>
</dbReference>
<dbReference type="Pfam" id="PF00071">
    <property type="entry name" value="Ras"/>
    <property type="match status" value="1"/>
</dbReference>
<dbReference type="PRINTS" id="PR00449">
    <property type="entry name" value="RASTRNSFRMNG"/>
</dbReference>
<dbReference type="SMART" id="SM00177">
    <property type="entry name" value="ARF"/>
    <property type="match status" value="1"/>
</dbReference>
<dbReference type="SMART" id="SM00175">
    <property type="entry name" value="RAB"/>
    <property type="match status" value="1"/>
</dbReference>
<dbReference type="SMART" id="SM00176">
    <property type="entry name" value="RAN"/>
    <property type="match status" value="1"/>
</dbReference>
<dbReference type="SMART" id="SM00173">
    <property type="entry name" value="RAS"/>
    <property type="match status" value="1"/>
</dbReference>
<dbReference type="SMART" id="SM00174">
    <property type="entry name" value="RHO"/>
    <property type="match status" value="1"/>
</dbReference>
<dbReference type="SUPFAM" id="SSF52540">
    <property type="entry name" value="P-loop containing nucleoside triphosphate hydrolases"/>
    <property type="match status" value="1"/>
</dbReference>
<comment type="function">
    <text evidence="1">Involved in exocytosis. Maybe by regulating the binding and fusion of secretory vesicles with the cell surface. The GTP-bound form of SEC4 may interact with an effector, thereby stimulating its activity and leading to exocytotic fusion. SEC4 may be an upstream activator of the 19.5S SEC8/SEC15 particle. SEC4 probably interacts directly with SEC8; it could serve as the attachment site for the SEC8/SEC15 particle (By similarity).</text>
</comment>
<comment type="subcellular location">
    <subcellularLocation>
        <location evidence="1">Cytoplasmic vesicle</location>
        <location evidence="1">Secretory vesicle membrane</location>
        <topology evidence="1">Lipid-anchor</topology>
        <orientation evidence="1">Cytoplasmic side</orientation>
    </subcellularLocation>
    <subcellularLocation>
        <location evidence="1">Cell membrane</location>
        <topology evidence="1">Lipid-anchor</topology>
        <orientation evidence="1">Cytoplasmic side</orientation>
    </subcellularLocation>
</comment>
<comment type="similarity">
    <text evidence="2">Belongs to the small GTPase superfamily. Rab family.</text>
</comment>
<organism>
    <name type="scientific">Candida albicans (strain WO-1)</name>
    <name type="common">Yeast</name>
    <dbReference type="NCBI Taxonomy" id="294748"/>
    <lineage>
        <taxon>Eukaryota</taxon>
        <taxon>Fungi</taxon>
        <taxon>Dikarya</taxon>
        <taxon>Ascomycota</taxon>
        <taxon>Saccharomycotina</taxon>
        <taxon>Pichiomycetes</taxon>
        <taxon>Debaryomycetaceae</taxon>
        <taxon>Candida/Lodderomyces clade</taxon>
        <taxon>Candida</taxon>
    </lineage>
</organism>
<sequence>MSGKGTSSRAYDMIMKLLLVGDSGVGKSCLLLRFVEDKFNPSFITTIGIDFKIRTIESKGKRIKLQVWDTAGQERFRTITTAYYRGAMGIVLIYDVTDSRSFENVENWFQTVTQHANEDAQIFLVGNKCDDEVNRQVSKEQGQELAAKLNVPFLEASAKSNENVDSIFYELASIIQEKHVEENIGGVGGASGAGGIDVSQNNSGAKNNCC</sequence>
<proteinExistence type="inferred from homology"/>
<gene>
    <name type="primary">SEC4</name>
    <name type="ORF">CAWG_01525</name>
</gene>
<protein>
    <recommendedName>
        <fullName>Ras-related protein SEC4</fullName>
    </recommendedName>
</protein>
<reference key="1">
    <citation type="journal article" date="1998" name="Yeast">
        <title>Isolation and characterization of the Candida albicans SEC4 gene.</title>
        <authorList>
            <person name="Clement M."/>
            <person name="Fournier H."/>
            <person name="de Repentigny L."/>
            <person name="Belhumeur P."/>
        </authorList>
    </citation>
    <scope>NUCLEOTIDE SEQUENCE [GENOMIC DNA]</scope>
    <source>
        <strain>WO-1</strain>
    </source>
</reference>
<reference key="2">
    <citation type="journal article" date="1999" name="J. Bacteriol.">
        <title>Overexpression of a dominant-negative allele of SEC4 inhibits growth and protein secretion in Candida albicans.</title>
        <authorList>
            <person name="Mao Y.X."/>
            <person name="Kalb V.F."/>
            <person name="Wong B."/>
        </authorList>
    </citation>
    <scope>NUCLEOTIDE SEQUENCE [GENOMIC DNA]</scope>
    <source>
        <strain>WO-1</strain>
    </source>
</reference>
<reference key="3">
    <citation type="journal article" date="2009" name="Nature">
        <title>Evolution of pathogenicity and sexual reproduction in eight Candida genomes.</title>
        <authorList>
            <person name="Butler G."/>
            <person name="Rasmussen M.D."/>
            <person name="Lin M.F."/>
            <person name="Santos M.A.S."/>
            <person name="Sakthikumar S."/>
            <person name="Munro C.A."/>
            <person name="Rheinbay E."/>
            <person name="Grabherr M."/>
            <person name="Forche A."/>
            <person name="Reedy J.L."/>
            <person name="Agrafioti I."/>
            <person name="Arnaud M.B."/>
            <person name="Bates S."/>
            <person name="Brown A.J.P."/>
            <person name="Brunke S."/>
            <person name="Costanzo M.C."/>
            <person name="Fitzpatrick D.A."/>
            <person name="de Groot P.W.J."/>
            <person name="Harris D."/>
            <person name="Hoyer L.L."/>
            <person name="Hube B."/>
            <person name="Klis F.M."/>
            <person name="Kodira C."/>
            <person name="Lennard N."/>
            <person name="Logue M.E."/>
            <person name="Martin R."/>
            <person name="Neiman A.M."/>
            <person name="Nikolaou E."/>
            <person name="Quail M.A."/>
            <person name="Quinn J."/>
            <person name="Santos M.C."/>
            <person name="Schmitzberger F.F."/>
            <person name="Sherlock G."/>
            <person name="Shah P."/>
            <person name="Silverstein K.A.T."/>
            <person name="Skrzypek M.S."/>
            <person name="Soll D."/>
            <person name="Staggs R."/>
            <person name="Stansfield I."/>
            <person name="Stumpf M.P.H."/>
            <person name="Sudbery P.E."/>
            <person name="Srikantha T."/>
            <person name="Zeng Q."/>
            <person name="Berman J."/>
            <person name="Berriman M."/>
            <person name="Heitman J."/>
            <person name="Gow N.A.R."/>
            <person name="Lorenz M.C."/>
            <person name="Birren B.W."/>
            <person name="Kellis M."/>
            <person name="Cuomo C.A."/>
        </authorList>
    </citation>
    <scope>NUCLEOTIDE SEQUENCE [LARGE SCALE GENOMIC DNA]</scope>
    <source>
        <strain>WO-1</strain>
    </source>
</reference>
<accession>C4YL11</accession>
<accession>O14462</accession>
<accession>Q5A994</accession>
<name>SEC4_CANAW</name>
<feature type="chain" id="PRO_0000413057" description="Ras-related protein SEC4">
    <location>
        <begin position="1"/>
        <end position="210"/>
    </location>
</feature>
<feature type="short sequence motif" description="Effector region" evidence="2">
    <location>
        <begin position="43"/>
        <end position="51"/>
    </location>
</feature>
<feature type="binding site" evidence="1">
    <location>
        <begin position="21"/>
        <end position="28"/>
    </location>
    <ligand>
        <name>GTP</name>
        <dbReference type="ChEBI" id="CHEBI:37565"/>
    </ligand>
</feature>
<feature type="binding site" evidence="1">
    <location>
        <begin position="69"/>
        <end position="73"/>
    </location>
    <ligand>
        <name>GTP</name>
        <dbReference type="ChEBI" id="CHEBI:37565"/>
    </ligand>
</feature>
<feature type="binding site" evidence="1">
    <location>
        <begin position="127"/>
        <end position="130"/>
    </location>
    <ligand>
        <name>GTP</name>
        <dbReference type="ChEBI" id="CHEBI:37565"/>
    </ligand>
</feature>
<feature type="lipid moiety-binding region" description="S-geranylgeranyl cysteine" evidence="1">
    <location>
        <position position="209"/>
    </location>
</feature>
<feature type="lipid moiety-binding region" description="S-geranylgeranyl cysteine" evidence="1">
    <location>
        <position position="210"/>
    </location>
</feature>
<evidence type="ECO:0000250" key="1"/>
<evidence type="ECO:0000305" key="2"/>